<gene>
    <name type="ordered locus">SACOL1378</name>
</gene>
<proteinExistence type="inferred from homology"/>
<name>Y1378_STAAC</name>
<reference key="1">
    <citation type="journal article" date="2005" name="J. Bacteriol.">
        <title>Insights on evolution of virulence and resistance from the complete genome analysis of an early methicillin-resistant Staphylococcus aureus strain and a biofilm-producing methicillin-resistant Staphylococcus epidermidis strain.</title>
        <authorList>
            <person name="Gill S.R."/>
            <person name="Fouts D.E."/>
            <person name="Archer G.L."/>
            <person name="Mongodin E.F."/>
            <person name="DeBoy R.T."/>
            <person name="Ravel J."/>
            <person name="Paulsen I.T."/>
            <person name="Kolonay J.F."/>
            <person name="Brinkac L.M."/>
            <person name="Beanan M.J."/>
            <person name="Dodson R.J."/>
            <person name="Daugherty S.C."/>
            <person name="Madupu R."/>
            <person name="Angiuoli S.V."/>
            <person name="Durkin A.S."/>
            <person name="Haft D.H."/>
            <person name="Vamathevan J.J."/>
            <person name="Khouri H."/>
            <person name="Utterback T.R."/>
            <person name="Lee C."/>
            <person name="Dimitrov G."/>
            <person name="Jiang L."/>
            <person name="Qin H."/>
            <person name="Weidman J."/>
            <person name="Tran K."/>
            <person name="Kang K.H."/>
            <person name="Hance I.R."/>
            <person name="Nelson K.E."/>
            <person name="Fraser C.M."/>
        </authorList>
    </citation>
    <scope>NUCLEOTIDE SEQUENCE [LARGE SCALE GENOMIC DNA]</scope>
    <source>
        <strain>COL</strain>
    </source>
</reference>
<dbReference type="EMBL" id="CP000046">
    <property type="protein sequence ID" value="AAW36627.1"/>
    <property type="molecule type" value="Genomic_DNA"/>
</dbReference>
<dbReference type="RefSeq" id="WP_000246909.1">
    <property type="nucleotide sequence ID" value="NZ_JBGOFO010000002.1"/>
</dbReference>
<dbReference type="SMR" id="Q5HG76"/>
<dbReference type="KEGG" id="sac:SACOL1378"/>
<dbReference type="HOGENOM" id="CLU_180108_0_1_9"/>
<dbReference type="Proteomes" id="UP000000530">
    <property type="component" value="Chromosome"/>
</dbReference>
<dbReference type="GO" id="GO:0005886">
    <property type="term" value="C:plasma membrane"/>
    <property type="evidence" value="ECO:0007669"/>
    <property type="project" value="UniProtKB-UniRule"/>
</dbReference>
<dbReference type="Gene3D" id="1.10.238.10">
    <property type="entry name" value="EF-hand"/>
    <property type="match status" value="1"/>
</dbReference>
<dbReference type="HAMAP" id="MF_00363">
    <property type="entry name" value="UPF0154"/>
    <property type="match status" value="1"/>
</dbReference>
<dbReference type="InterPro" id="IPR011992">
    <property type="entry name" value="EF-hand-dom_pair"/>
</dbReference>
<dbReference type="InterPro" id="IPR005359">
    <property type="entry name" value="UPF0154"/>
</dbReference>
<dbReference type="Pfam" id="PF03672">
    <property type="entry name" value="UPF0154"/>
    <property type="match status" value="1"/>
</dbReference>
<dbReference type="SUPFAM" id="SSF47473">
    <property type="entry name" value="EF-hand"/>
    <property type="match status" value="1"/>
</dbReference>
<accession>Q5HG76</accession>
<organism>
    <name type="scientific">Staphylococcus aureus (strain COL)</name>
    <dbReference type="NCBI Taxonomy" id="93062"/>
    <lineage>
        <taxon>Bacteria</taxon>
        <taxon>Bacillati</taxon>
        <taxon>Bacillota</taxon>
        <taxon>Bacilli</taxon>
        <taxon>Bacillales</taxon>
        <taxon>Staphylococcaceae</taxon>
        <taxon>Staphylococcus</taxon>
    </lineage>
</organism>
<evidence type="ECO:0000255" key="1">
    <source>
        <dbReference type="HAMAP-Rule" id="MF_00363"/>
    </source>
</evidence>
<sequence length="80" mass="9320">MATWLAIIFIVAALILGLIGGFLLARKYMMDYLKKNPPINEEMLRMMMMQMGQKPSQKKINQMMTMMNKNMDQNMKSAKK</sequence>
<feature type="chain" id="PRO_0000214973" description="UPF0154 protein SACOL1378">
    <location>
        <begin position="1"/>
        <end position="80"/>
    </location>
</feature>
<feature type="transmembrane region" description="Helical" evidence="1">
    <location>
        <begin position="4"/>
        <end position="24"/>
    </location>
</feature>
<comment type="subcellular location">
    <subcellularLocation>
        <location evidence="1">Membrane</location>
        <topology evidence="1">Single-pass membrane protein</topology>
    </subcellularLocation>
</comment>
<comment type="similarity">
    <text evidence="1">Belongs to the UPF0154 family.</text>
</comment>
<protein>
    <recommendedName>
        <fullName evidence="1">UPF0154 protein SACOL1378</fullName>
    </recommendedName>
</protein>
<keyword id="KW-0472">Membrane</keyword>
<keyword id="KW-0812">Transmembrane</keyword>
<keyword id="KW-1133">Transmembrane helix</keyword>